<reference key="1">
    <citation type="journal article" date="2007" name="J. Bacteriol.">
        <title>The genome sequence of avian pathogenic Escherichia coli strain O1:K1:H7 shares strong similarities with human extraintestinal pathogenic E. coli genomes.</title>
        <authorList>
            <person name="Johnson T.J."/>
            <person name="Kariyawasam S."/>
            <person name="Wannemuehler Y."/>
            <person name="Mangiamele P."/>
            <person name="Johnson S.J."/>
            <person name="Doetkott C."/>
            <person name="Skyberg J.A."/>
            <person name="Lynne A.M."/>
            <person name="Johnson J.R."/>
            <person name="Nolan L.K."/>
        </authorList>
    </citation>
    <scope>NUCLEOTIDE SEQUENCE [LARGE SCALE GENOMIC DNA]</scope>
</reference>
<feature type="chain" id="PRO_1000052395" description="Large ribosomal subunit protein uL4">
    <location>
        <begin position="1"/>
        <end position="201"/>
    </location>
</feature>
<feature type="region of interest" description="Disordered" evidence="2">
    <location>
        <begin position="44"/>
        <end position="71"/>
    </location>
</feature>
<accession>A1AGK6</accession>
<organism>
    <name type="scientific">Escherichia coli O1:K1 / APEC</name>
    <dbReference type="NCBI Taxonomy" id="405955"/>
    <lineage>
        <taxon>Bacteria</taxon>
        <taxon>Pseudomonadati</taxon>
        <taxon>Pseudomonadota</taxon>
        <taxon>Gammaproteobacteria</taxon>
        <taxon>Enterobacterales</taxon>
        <taxon>Enterobacteriaceae</taxon>
        <taxon>Escherichia</taxon>
    </lineage>
</organism>
<keyword id="KW-1185">Reference proteome</keyword>
<keyword id="KW-0687">Ribonucleoprotein</keyword>
<keyword id="KW-0689">Ribosomal protein</keyword>
<keyword id="KW-0694">RNA-binding</keyword>
<keyword id="KW-0699">rRNA-binding</keyword>
<gene>
    <name evidence="1" type="primary">rplD</name>
    <name type="ordered locus">Ecok1_33020</name>
    <name type="ORF">APECO1_3132</name>
</gene>
<proteinExistence type="inferred from homology"/>
<comment type="function">
    <text evidence="1">One of the primary rRNA binding proteins, this protein initially binds near the 5'-end of the 23S rRNA. It is important during the early stages of 50S assembly. It makes multiple contacts with different domains of the 23S rRNA in the assembled 50S subunit and ribosome.</text>
</comment>
<comment type="function">
    <text evidence="1">Forms part of the polypeptide exit tunnel.</text>
</comment>
<comment type="subunit">
    <text evidence="1">Part of the 50S ribosomal subunit.</text>
</comment>
<comment type="similarity">
    <text evidence="1">Belongs to the universal ribosomal protein uL4 family.</text>
</comment>
<sequence>MELVLKDAQSALTVSETTFGRDFNEALVHQVVVAYAAGARQGTRAQKTRAEVTGSGKKPWRQKGTGRARSGSIKSPIWRSGGVTFAARPQDHSQKVNKKMYRGALKSILSELVRQDRLIVVEKFSVEAPKTKLLAQKLKDMALEDVLIITGELDENLFLAARNLHKVDVRDATGIDPVSLIAFDKVVMTADAVKQVEEMLA</sequence>
<dbReference type="EMBL" id="CP000468">
    <property type="protein sequence ID" value="ABJ02796.1"/>
    <property type="molecule type" value="Genomic_DNA"/>
</dbReference>
<dbReference type="RefSeq" id="WP_000424395.1">
    <property type="nucleotide sequence ID" value="NZ_CADILS010000044.1"/>
</dbReference>
<dbReference type="EMDB" id="EMD-28197"/>
<dbReference type="EMDB" id="EMD-29620"/>
<dbReference type="EMDB" id="EMD-29621"/>
<dbReference type="EMDB" id="EMD-29624"/>
<dbReference type="EMDB" id="EMD-29627"/>
<dbReference type="EMDB" id="EMD-29628"/>
<dbReference type="EMDB" id="EMD-29631"/>
<dbReference type="EMDB" id="EMD-29634"/>
<dbReference type="EMDB" id="EMD-29689"/>
<dbReference type="EMDB" id="EMD-29786"/>
<dbReference type="EMDB" id="EMD-29788"/>
<dbReference type="EMDB" id="EMD-29819"/>
<dbReference type="EMDB" id="EMD-29820"/>
<dbReference type="EMDB" id="EMD-29821"/>
<dbReference type="EMDB" id="EMD-29822"/>
<dbReference type="EMDB" id="EMD-40882"/>
<dbReference type="EMDB" id="EMD-41049"/>
<dbReference type="EMDB" id="EMD-41050"/>
<dbReference type="EMDB" id="EMD-42453"/>
<dbReference type="EMDB" id="EMD-42454"/>
<dbReference type="EMDB" id="EMD-42473"/>
<dbReference type="EMDB" id="EMD-42474"/>
<dbReference type="EMDB" id="EMD-42477"/>
<dbReference type="EMDB" id="EMD-42479"/>
<dbReference type="EMDB" id="EMD-42492"/>
<dbReference type="EMDB" id="EMD-42493"/>
<dbReference type="EMDB" id="EMD-42503"/>
<dbReference type="EMDB" id="EMD-42504"/>
<dbReference type="EMDB" id="EMD-43490"/>
<dbReference type="EMDB" id="EMD-43491"/>
<dbReference type="EMDB" id="EMD-43929"/>
<dbReference type="EMDB" id="EMD-43930"/>
<dbReference type="EMDB" id="EMD-45569"/>
<dbReference type="EMDB" id="EMD-45572"/>
<dbReference type="EMDB" id="EMD-45573"/>
<dbReference type="EMDB" id="EMD-46632"/>
<dbReference type="SMR" id="A1AGK6"/>
<dbReference type="GeneID" id="97442859"/>
<dbReference type="KEGG" id="ecv:APECO1_3132"/>
<dbReference type="HOGENOM" id="CLU_041575_5_2_6"/>
<dbReference type="Proteomes" id="UP000008216">
    <property type="component" value="Chromosome"/>
</dbReference>
<dbReference type="GO" id="GO:1990904">
    <property type="term" value="C:ribonucleoprotein complex"/>
    <property type="evidence" value="ECO:0007669"/>
    <property type="project" value="UniProtKB-KW"/>
</dbReference>
<dbReference type="GO" id="GO:0005840">
    <property type="term" value="C:ribosome"/>
    <property type="evidence" value="ECO:0007669"/>
    <property type="project" value="UniProtKB-KW"/>
</dbReference>
<dbReference type="GO" id="GO:0019843">
    <property type="term" value="F:rRNA binding"/>
    <property type="evidence" value="ECO:0007669"/>
    <property type="project" value="UniProtKB-UniRule"/>
</dbReference>
<dbReference type="GO" id="GO:0003735">
    <property type="term" value="F:structural constituent of ribosome"/>
    <property type="evidence" value="ECO:0007669"/>
    <property type="project" value="InterPro"/>
</dbReference>
<dbReference type="GO" id="GO:0006412">
    <property type="term" value="P:translation"/>
    <property type="evidence" value="ECO:0007669"/>
    <property type="project" value="UniProtKB-UniRule"/>
</dbReference>
<dbReference type="FunFam" id="3.40.1370.10:FF:000001">
    <property type="entry name" value="50S ribosomal protein L4"/>
    <property type="match status" value="1"/>
</dbReference>
<dbReference type="Gene3D" id="3.40.1370.10">
    <property type="match status" value="1"/>
</dbReference>
<dbReference type="HAMAP" id="MF_01328_B">
    <property type="entry name" value="Ribosomal_uL4_B"/>
    <property type="match status" value="1"/>
</dbReference>
<dbReference type="InterPro" id="IPR002136">
    <property type="entry name" value="Ribosomal_uL4"/>
</dbReference>
<dbReference type="InterPro" id="IPR013005">
    <property type="entry name" value="Ribosomal_uL4-like"/>
</dbReference>
<dbReference type="InterPro" id="IPR023574">
    <property type="entry name" value="Ribosomal_uL4_dom_sf"/>
</dbReference>
<dbReference type="NCBIfam" id="TIGR03953">
    <property type="entry name" value="rplD_bact"/>
    <property type="match status" value="1"/>
</dbReference>
<dbReference type="PANTHER" id="PTHR10746">
    <property type="entry name" value="50S RIBOSOMAL PROTEIN L4"/>
    <property type="match status" value="1"/>
</dbReference>
<dbReference type="PANTHER" id="PTHR10746:SF6">
    <property type="entry name" value="LARGE RIBOSOMAL SUBUNIT PROTEIN UL4M"/>
    <property type="match status" value="1"/>
</dbReference>
<dbReference type="Pfam" id="PF00573">
    <property type="entry name" value="Ribosomal_L4"/>
    <property type="match status" value="1"/>
</dbReference>
<dbReference type="SUPFAM" id="SSF52166">
    <property type="entry name" value="Ribosomal protein L4"/>
    <property type="match status" value="1"/>
</dbReference>
<name>RL4_ECOK1</name>
<evidence type="ECO:0000255" key="1">
    <source>
        <dbReference type="HAMAP-Rule" id="MF_01328"/>
    </source>
</evidence>
<evidence type="ECO:0000256" key="2">
    <source>
        <dbReference type="SAM" id="MobiDB-lite"/>
    </source>
</evidence>
<evidence type="ECO:0000305" key="3"/>
<protein>
    <recommendedName>
        <fullName evidence="1">Large ribosomal subunit protein uL4</fullName>
    </recommendedName>
    <alternativeName>
        <fullName evidence="3">50S ribosomal protein L4</fullName>
    </alternativeName>
</protein>